<accession>Q561R9</accession>
<evidence type="ECO:0000250" key="1">
    <source>
        <dbReference type="UniProtKB" id="Q53H82"/>
    </source>
</evidence>
<evidence type="ECO:0000250" key="2">
    <source>
        <dbReference type="UniProtKB" id="Q99KR3"/>
    </source>
</evidence>
<evidence type="ECO:0000305" key="3"/>
<protein>
    <recommendedName>
        <fullName evidence="1">Endoribonuclease LACTB2</fullName>
    </recommendedName>
    <alternativeName>
        <fullName>Beta-lactamase-like protein 2</fullName>
        <ecNumber evidence="1">3.1.27.-</ecNumber>
    </alternativeName>
</protein>
<name>LACB2_RAT</name>
<feature type="chain" id="PRO_0000315745" description="Endoribonuclease LACTB2">
    <location>
        <begin position="1"/>
        <end position="288"/>
    </location>
</feature>
<feature type="binding site" evidence="1">
    <location>
        <position position="77"/>
    </location>
    <ligand>
        <name>Zn(2+)</name>
        <dbReference type="ChEBI" id="CHEBI:29105"/>
        <label>1</label>
    </ligand>
</feature>
<feature type="binding site" evidence="1">
    <location>
        <position position="79"/>
    </location>
    <ligand>
        <name>Zn(2+)</name>
        <dbReference type="ChEBI" id="CHEBI:29105"/>
        <label>1</label>
    </ligand>
</feature>
<feature type="binding site" evidence="1">
    <location>
        <position position="81"/>
    </location>
    <ligand>
        <name>Zn(2+)</name>
        <dbReference type="ChEBI" id="CHEBI:29105"/>
        <label>2</label>
    </ligand>
</feature>
<feature type="binding site" evidence="1">
    <location>
        <position position="82"/>
    </location>
    <ligand>
        <name>Zn(2+)</name>
        <dbReference type="ChEBI" id="CHEBI:29105"/>
        <label>2</label>
    </ligand>
</feature>
<feature type="binding site" evidence="1">
    <location>
        <position position="118"/>
    </location>
    <ligand>
        <name>Zn(2+)</name>
        <dbReference type="ChEBI" id="CHEBI:29105"/>
        <label>1</label>
    </ligand>
</feature>
<feature type="binding site" evidence="1">
    <location>
        <position position="118"/>
    </location>
    <ligand>
        <name>Zn(2+)</name>
        <dbReference type="ChEBI" id="CHEBI:29105"/>
        <label>2</label>
    </ligand>
</feature>
<feature type="binding site" evidence="1">
    <location>
        <position position="145"/>
    </location>
    <ligand>
        <name>Zn(2+)</name>
        <dbReference type="ChEBI" id="CHEBI:29105"/>
        <label>1</label>
    </ligand>
</feature>
<feature type="binding site" evidence="1">
    <location>
        <position position="164"/>
    </location>
    <ligand>
        <name>Zn(2+)</name>
        <dbReference type="ChEBI" id="CHEBI:29105"/>
        <label>1</label>
    </ligand>
</feature>
<feature type="binding site" evidence="1">
    <location>
        <position position="164"/>
    </location>
    <ligand>
        <name>Zn(2+)</name>
        <dbReference type="ChEBI" id="CHEBI:29105"/>
        <label>2</label>
    </ligand>
</feature>
<feature type="binding site" evidence="1">
    <location>
        <position position="199"/>
    </location>
    <ligand>
        <name>Zn(2+)</name>
        <dbReference type="ChEBI" id="CHEBI:29105"/>
        <label>2</label>
    </ligand>
</feature>
<feature type="modified residue" description="N6-acetyllysine" evidence="2">
    <location>
        <position position="102"/>
    </location>
</feature>
<feature type="modified residue" description="Phosphoserine" evidence="2">
    <location>
        <position position="235"/>
    </location>
</feature>
<feature type="modified residue" description="N6-succinyllysine" evidence="2">
    <location>
        <position position="273"/>
    </location>
</feature>
<feature type="modified residue" description="N6-acetyllysine" evidence="2">
    <location>
        <position position="282"/>
    </location>
</feature>
<proteinExistence type="evidence at transcript level"/>
<keyword id="KW-0007">Acetylation</keyword>
<keyword id="KW-0255">Endonuclease</keyword>
<keyword id="KW-0378">Hydrolase</keyword>
<keyword id="KW-0479">Metal-binding</keyword>
<keyword id="KW-0496">Mitochondrion</keyword>
<keyword id="KW-0540">Nuclease</keyword>
<keyword id="KW-0597">Phosphoprotein</keyword>
<keyword id="KW-1185">Reference proteome</keyword>
<keyword id="KW-0694">RNA-binding</keyword>
<keyword id="KW-0862">Zinc</keyword>
<gene>
    <name type="primary">Lactb2</name>
</gene>
<reference key="1">
    <citation type="journal article" date="2004" name="Genome Res.">
        <title>The status, quality, and expansion of the NIH full-length cDNA project: the Mammalian Gene Collection (MGC).</title>
        <authorList>
            <consortium name="The MGC Project Team"/>
        </authorList>
    </citation>
    <scope>NUCLEOTIDE SEQUENCE [LARGE SCALE MRNA]</scope>
    <source>
        <tissue>Thymus</tissue>
    </source>
</reference>
<comment type="function">
    <text evidence="1">Endoribonuclease; cleaves preferentially 3' to purine-pyrimidine dinucleotide motifs in single-stranded RNA. The cleavage product contains a free 3' -OH group. Has no activity with double-stranded RNA or DNA. Required for normal mitochondrial function and cell viability.</text>
</comment>
<comment type="cofactor">
    <cofactor evidence="1">
        <name>Zn(2+)</name>
        <dbReference type="ChEBI" id="CHEBI:29105"/>
    </cofactor>
    <text evidence="1">Binds 2 Zn(2+) ions per subunit.</text>
</comment>
<comment type="subunit">
    <text evidence="1">Monomer.</text>
</comment>
<comment type="subcellular location">
    <subcellularLocation>
        <location evidence="1">Mitochondrion matrix</location>
    </subcellularLocation>
</comment>
<comment type="similarity">
    <text evidence="3">Belongs to the metallo-beta-lactamase superfamily. Glyoxalase II family.</text>
</comment>
<organism>
    <name type="scientific">Rattus norvegicus</name>
    <name type="common">Rat</name>
    <dbReference type="NCBI Taxonomy" id="10116"/>
    <lineage>
        <taxon>Eukaryota</taxon>
        <taxon>Metazoa</taxon>
        <taxon>Chordata</taxon>
        <taxon>Craniata</taxon>
        <taxon>Vertebrata</taxon>
        <taxon>Euteleostomi</taxon>
        <taxon>Mammalia</taxon>
        <taxon>Eutheria</taxon>
        <taxon>Euarchontoglires</taxon>
        <taxon>Glires</taxon>
        <taxon>Rodentia</taxon>
        <taxon>Myomorpha</taxon>
        <taxon>Muroidea</taxon>
        <taxon>Muridae</taxon>
        <taxon>Murinae</taxon>
        <taxon>Rattus</taxon>
    </lineage>
</organism>
<sequence length="288" mass="32484">MAAALQRIEQLSSRVVRVLGCNPGPMTLQGTNTYLVGTGSRRILIDTGEPSVPEYISCLKQALAEFDTAIQEILVTHWHRDHSGGIVDICKNISNDATYCIKKLRRNPQKEEIIGSGEQQYVYIEDGDLIKTEGATLRVLYTPGHTDDHMALLLEEENAIFSGDCILGEGTTIFEDLSDYMNSLKDLLKVKANIIYPGHGPVIHNAEAKILEYISHRNNREEQIITVFRDNLEESFSVSELRKMIYKNVPENLHKMAEHNLLLHLRKLEKDGKIFSIASPAKKWRASL</sequence>
<dbReference type="EC" id="3.1.27.-" evidence="1"/>
<dbReference type="EMBL" id="BC093378">
    <property type="protein sequence ID" value="AAH93378.1"/>
    <property type="molecule type" value="mRNA"/>
</dbReference>
<dbReference type="RefSeq" id="NP_001019418.1">
    <property type="nucleotide sequence ID" value="NM_001024247.1"/>
</dbReference>
<dbReference type="SMR" id="Q561R9"/>
<dbReference type="FunCoup" id="Q561R9">
    <property type="interactions" value="2582"/>
</dbReference>
<dbReference type="IntAct" id="Q561R9">
    <property type="interactions" value="11"/>
</dbReference>
<dbReference type="STRING" id="10116.ENSRNOP00000010369"/>
<dbReference type="iPTMnet" id="Q561R9"/>
<dbReference type="PhosphoSitePlus" id="Q561R9"/>
<dbReference type="jPOST" id="Q561R9"/>
<dbReference type="PaxDb" id="10116-ENSRNOP00000010369"/>
<dbReference type="Ensembl" id="ENSRNOT00000112393.1">
    <property type="protein sequence ID" value="ENSRNOP00000084220.1"/>
    <property type="gene ID" value="ENSRNOG00000007829.5"/>
</dbReference>
<dbReference type="GeneID" id="297768"/>
<dbReference type="KEGG" id="rno:297768"/>
<dbReference type="UCSC" id="RGD:1307876">
    <property type="organism name" value="rat"/>
</dbReference>
<dbReference type="AGR" id="RGD:1307876"/>
<dbReference type="CTD" id="51110"/>
<dbReference type="RGD" id="1307876">
    <property type="gene designation" value="Lactb2"/>
</dbReference>
<dbReference type="eggNOG" id="KOG0813">
    <property type="taxonomic scope" value="Eukaryota"/>
</dbReference>
<dbReference type="GeneTree" id="ENSGT00390000001710"/>
<dbReference type="HOGENOM" id="CLU_048478_1_2_1"/>
<dbReference type="InParanoid" id="Q561R9"/>
<dbReference type="OMA" id="GDHVMAW"/>
<dbReference type="OrthoDB" id="17458at2759"/>
<dbReference type="PhylomeDB" id="Q561R9"/>
<dbReference type="TreeFam" id="TF314297"/>
<dbReference type="PRO" id="PR:Q561R9"/>
<dbReference type="Proteomes" id="UP000002494">
    <property type="component" value="Chromosome 5"/>
</dbReference>
<dbReference type="Bgee" id="ENSRNOG00000007829">
    <property type="expression patterns" value="Expressed in kidney and 20 other cell types or tissues"/>
</dbReference>
<dbReference type="GO" id="GO:0005759">
    <property type="term" value="C:mitochondrial matrix"/>
    <property type="evidence" value="ECO:0000250"/>
    <property type="project" value="UniProtKB"/>
</dbReference>
<dbReference type="GO" id="GO:0004521">
    <property type="term" value="F:RNA endonuclease activity"/>
    <property type="evidence" value="ECO:0000250"/>
    <property type="project" value="UniProtKB"/>
</dbReference>
<dbReference type="GO" id="GO:0003727">
    <property type="term" value="F:single-stranded RNA binding"/>
    <property type="evidence" value="ECO:0000250"/>
    <property type="project" value="UniProtKB"/>
</dbReference>
<dbReference type="GO" id="GO:0008270">
    <property type="term" value="F:zinc ion binding"/>
    <property type="evidence" value="ECO:0000250"/>
    <property type="project" value="UniProtKB"/>
</dbReference>
<dbReference type="CDD" id="cd07722">
    <property type="entry name" value="LACTB2-like_MBL-fold"/>
    <property type="match status" value="1"/>
</dbReference>
<dbReference type="FunFam" id="1.10.10.10:FF:000328">
    <property type="entry name" value="Lactamase beta 2"/>
    <property type="match status" value="1"/>
</dbReference>
<dbReference type="FunFam" id="3.60.15.10:FF:000017">
    <property type="entry name" value="Lactamase beta 2"/>
    <property type="match status" value="1"/>
</dbReference>
<dbReference type="Gene3D" id="3.60.15.10">
    <property type="entry name" value="Ribonuclease Z/Hydroxyacylglutathione hydrolase-like"/>
    <property type="match status" value="1"/>
</dbReference>
<dbReference type="Gene3D" id="1.10.10.10">
    <property type="entry name" value="Winged helix-like DNA-binding domain superfamily/Winged helix DNA-binding domain"/>
    <property type="match status" value="1"/>
</dbReference>
<dbReference type="InterPro" id="IPR047921">
    <property type="entry name" value="LACTB2-like_MBL-fold"/>
</dbReference>
<dbReference type="InterPro" id="IPR041516">
    <property type="entry name" value="LACTB2_WH"/>
</dbReference>
<dbReference type="InterPro" id="IPR001279">
    <property type="entry name" value="Metallo-B-lactamas"/>
</dbReference>
<dbReference type="InterPro" id="IPR036866">
    <property type="entry name" value="RibonucZ/Hydroxyglut_hydro"/>
</dbReference>
<dbReference type="InterPro" id="IPR050662">
    <property type="entry name" value="Sec-metab_biosynth-thioest"/>
</dbReference>
<dbReference type="InterPro" id="IPR036388">
    <property type="entry name" value="WH-like_DNA-bd_sf"/>
</dbReference>
<dbReference type="PANTHER" id="PTHR23131">
    <property type="entry name" value="ENDORIBONUCLEASE LACTB2"/>
    <property type="match status" value="1"/>
</dbReference>
<dbReference type="PANTHER" id="PTHR23131:SF0">
    <property type="entry name" value="ENDORIBONUCLEASE LACTB2"/>
    <property type="match status" value="1"/>
</dbReference>
<dbReference type="Pfam" id="PF17778">
    <property type="entry name" value="BLACT_WH"/>
    <property type="match status" value="1"/>
</dbReference>
<dbReference type="Pfam" id="PF00753">
    <property type="entry name" value="Lactamase_B"/>
    <property type="match status" value="1"/>
</dbReference>
<dbReference type="SMART" id="SM00849">
    <property type="entry name" value="Lactamase_B"/>
    <property type="match status" value="1"/>
</dbReference>
<dbReference type="SUPFAM" id="SSF56281">
    <property type="entry name" value="Metallo-hydrolase/oxidoreductase"/>
    <property type="match status" value="1"/>
</dbReference>